<name>CING_DANRE</name>
<evidence type="ECO:0000250" key="1"/>
<evidence type="ECO:0000250" key="2">
    <source>
        <dbReference type="UniProtKB" id="P59242"/>
    </source>
</evidence>
<evidence type="ECO:0000250" key="3">
    <source>
        <dbReference type="UniProtKB" id="Q9P2M7"/>
    </source>
</evidence>
<evidence type="ECO:0000255" key="4"/>
<evidence type="ECO:0000256" key="5">
    <source>
        <dbReference type="SAM" id="MobiDB-lite"/>
    </source>
</evidence>
<evidence type="ECO:0000305" key="6"/>
<dbReference type="EMBL" id="CR628394">
    <property type="status" value="NOT_ANNOTATED_CDS"/>
    <property type="molecule type" value="Genomic_DNA"/>
</dbReference>
<dbReference type="EMBL" id="BC139880">
    <property type="protein sequence ID" value="AAI39881.1"/>
    <property type="molecule type" value="mRNA"/>
</dbReference>
<dbReference type="RefSeq" id="NP_001038227.1">
    <property type="nucleotide sequence ID" value="NM_001044762.1"/>
</dbReference>
<dbReference type="SMR" id="Q1L8T5"/>
<dbReference type="FunCoup" id="Q1L8T5">
    <property type="interactions" value="625"/>
</dbReference>
<dbReference type="STRING" id="7955.ENSDARP00000102223"/>
<dbReference type="PaxDb" id="7955-ENSDARP00000102223"/>
<dbReference type="GeneID" id="100005752"/>
<dbReference type="KEGG" id="dre:100005752"/>
<dbReference type="AGR" id="ZFIN:ZDB-GENE-050208-72"/>
<dbReference type="CTD" id="100005752"/>
<dbReference type="ZFIN" id="ZDB-GENE-050208-72">
    <property type="gene designation" value="cgnb"/>
</dbReference>
<dbReference type="eggNOG" id="ENOG502QPNG">
    <property type="taxonomic scope" value="Eukaryota"/>
</dbReference>
<dbReference type="InParanoid" id="Q1L8T5"/>
<dbReference type="OrthoDB" id="6108017at2759"/>
<dbReference type="PhylomeDB" id="Q1L8T5"/>
<dbReference type="Reactome" id="R-DRE-2173791">
    <property type="pathway name" value="TGF-beta receptor signaling in EMT (epithelial to mesenchymal transition)"/>
</dbReference>
<dbReference type="PRO" id="PR:Q1L8T5"/>
<dbReference type="Proteomes" id="UP000000437">
    <property type="component" value="Chromosome 19"/>
</dbReference>
<dbReference type="GO" id="GO:0005923">
    <property type="term" value="C:bicellular tight junction"/>
    <property type="evidence" value="ECO:0000318"/>
    <property type="project" value="GO_Central"/>
</dbReference>
<dbReference type="GO" id="GO:0016459">
    <property type="term" value="C:myosin complex"/>
    <property type="evidence" value="ECO:0007669"/>
    <property type="project" value="InterPro"/>
</dbReference>
<dbReference type="GO" id="GO:0008017">
    <property type="term" value="F:microtubule binding"/>
    <property type="evidence" value="ECO:0000318"/>
    <property type="project" value="GO_Central"/>
</dbReference>
<dbReference type="GO" id="GO:0000226">
    <property type="term" value="P:microtubule cytoskeleton organization"/>
    <property type="evidence" value="ECO:0000318"/>
    <property type="project" value="GO_Central"/>
</dbReference>
<dbReference type="GO" id="GO:0048916">
    <property type="term" value="P:posterior lateral line development"/>
    <property type="evidence" value="ECO:0000315"/>
    <property type="project" value="ZFIN"/>
</dbReference>
<dbReference type="InterPro" id="IPR002928">
    <property type="entry name" value="Myosin_tail"/>
</dbReference>
<dbReference type="PANTHER" id="PTHR46349:SF5">
    <property type="entry name" value="CINGULIN"/>
    <property type="match status" value="1"/>
</dbReference>
<dbReference type="PANTHER" id="PTHR46349">
    <property type="entry name" value="CINGULIN-LIKE PROTEIN 1-RELATED"/>
    <property type="match status" value="1"/>
</dbReference>
<dbReference type="Pfam" id="PF01576">
    <property type="entry name" value="Myosin_tail_1"/>
    <property type="match status" value="1"/>
</dbReference>
<proteinExistence type="evidence at transcript level"/>
<gene>
    <name evidence="3" type="primary">cgn</name>
    <name type="ORF">si:dkey-204a24.2</name>
</gene>
<feature type="chain" id="PRO_0000371433" description="Cingulin">
    <location>
        <begin position="1"/>
        <end position="1161"/>
    </location>
</feature>
<feature type="region of interest" description="Head" evidence="1">
    <location>
        <begin position="1"/>
        <end position="403"/>
    </location>
</feature>
<feature type="region of interest" description="Disordered" evidence="5">
    <location>
        <begin position="29"/>
        <end position="53"/>
    </location>
</feature>
<feature type="region of interest" description="Disordered" evidence="5">
    <location>
        <begin position="79"/>
        <end position="309"/>
    </location>
</feature>
<feature type="region of interest" description="Disordered" evidence="5">
    <location>
        <begin position="649"/>
        <end position="678"/>
    </location>
</feature>
<feature type="region of interest" description="Disordered" evidence="5">
    <location>
        <begin position="699"/>
        <end position="721"/>
    </location>
</feature>
<feature type="region of interest" description="Disordered" evidence="5">
    <location>
        <begin position="739"/>
        <end position="773"/>
    </location>
</feature>
<feature type="region of interest" description="Tail" evidence="1">
    <location>
        <begin position="1122"/>
        <end position="1161"/>
    </location>
</feature>
<feature type="region of interest" description="Disordered" evidence="5">
    <location>
        <begin position="1123"/>
        <end position="1161"/>
    </location>
</feature>
<feature type="coiled-coil region" evidence="4">
    <location>
        <begin position="413"/>
        <end position="1128"/>
    </location>
</feature>
<feature type="short sequence motif" description="ZIM">
    <location>
        <begin position="51"/>
        <end position="65"/>
    </location>
</feature>
<feature type="compositionally biased region" description="Polar residues" evidence="5">
    <location>
        <begin position="84"/>
        <end position="104"/>
    </location>
</feature>
<feature type="compositionally biased region" description="Polar residues" evidence="5">
    <location>
        <begin position="117"/>
        <end position="129"/>
    </location>
</feature>
<feature type="compositionally biased region" description="Low complexity" evidence="5">
    <location>
        <begin position="189"/>
        <end position="203"/>
    </location>
</feature>
<feature type="compositionally biased region" description="Polar residues" evidence="5">
    <location>
        <begin position="273"/>
        <end position="305"/>
    </location>
</feature>
<feature type="compositionally biased region" description="Low complexity" evidence="5">
    <location>
        <begin position="742"/>
        <end position="751"/>
    </location>
</feature>
<feature type="compositionally biased region" description="Basic and acidic residues" evidence="5">
    <location>
        <begin position="755"/>
        <end position="773"/>
    </location>
</feature>
<feature type="compositionally biased region" description="Low complexity" evidence="5">
    <location>
        <begin position="1124"/>
        <end position="1134"/>
    </location>
</feature>
<feature type="compositionally biased region" description="Polar residues" evidence="5">
    <location>
        <begin position="1143"/>
        <end position="1161"/>
    </location>
</feature>
<feature type="sequence conflict" description="In Ref. 2; AAI39881." evidence="6" ref="2">
    <original>G</original>
    <variation>S</variation>
    <location>
        <position position="62"/>
    </location>
</feature>
<feature type="sequence conflict" description="In Ref. 2; AAI39881." evidence="6" ref="2">
    <original>A</original>
    <variation>ATSS</variation>
    <location>
        <position position="274"/>
    </location>
</feature>
<feature type="sequence conflict" description="In Ref. 2; AAI39881." evidence="6" ref="2">
    <original>F</original>
    <variation>S</variation>
    <location>
        <position position="334"/>
    </location>
</feature>
<feature type="sequence conflict" description="In Ref. 2; AAI39881." evidence="6" ref="2">
    <original>T</original>
    <variation>A</variation>
    <location>
        <position position="894"/>
    </location>
</feature>
<feature type="sequence conflict" description="In Ref. 2; AAI39881." evidence="6" ref="2">
    <original>L</original>
    <variation>LK</variation>
    <location>
        <position position="1118"/>
    </location>
</feature>
<sequence>MSSLSADRKPPLDYGVQIRFIKDLDDAGGGFPDKSRLANGVGGVSNGTSSPSKYGVAVRVQGISGQPYVVLQDGEKGDSYGVQLKTQPQIQSAPPVVSQTSPYNTLLLGQREGARTPQGSYNPTDQPSSPDEDFGSPLRRPPGDGQAGTQGEAEPRTTERFTPSALAPKLDKKDNDAFNEAGLRKVKQNGIGSSLNGTGLNGSFPPPSSAQDEDQAPAIDTKSLAPINKLISRFGGGGGGSGDILNSEAQTRPRLDNRVRSQSADALNKPSEEASSTSPTINPYAPNTSATVPKLNSTKPSSTGSLGRDATSVAKVAAIPNFKPLAFNQSPKLFAPKEAPPAVPKKPVTPDLIKSQTTSIENGNGEDDQTKQAIYNILKEGSIEKEEAIKRKASLIHERFCGVKAPQISVTDSNMKTELEQAFGRNTQLQQQLDKSRRELQENQDQMVELRMDREGAESRLRQQEDQLAQLQEELRRTLENSPQSDSMQLDLLTVQAELSESQLLRQKLEDTLRQRERELTALKGALKDEVASHDKEMEALREQFSQDMDALRHSMETVSQSQLEIEEERQKVNASILAMEEELEGYKEQSEQWKKQFSSANQELLKAQQGKRELEEKLLAVVKQTDETDSNSVMKELQQCRDSLKKAQSELEKQKAETLKKQEELKSATRASEKRETELKAEIDRLINQLKKEKEELSKAIEKTQQPLVSDQTKDPESNLELQEANARLRERIARMTRLHSSVPDSSSSDALEEENRSLKTQLEESRRAASRLGVEKEELNRRLEEREREREALRRGKSDLEEQKRLLDRSLDKINKEMESMMGDSRQSVQVLQSQLEEFRDRSRRELQDAQRLSKDRLVELQRAQALLKTTQEEVSRVKKELLSCTEERDSTQLDKELLSSRLKNMETELQTDRSSQTDRSREIRLLEDKVKTLEIELDEEKSGAELLNERITRCREQVDQLRSELMQERSARHDLEMDKSALERQIKELKSRIADMGTQSRPSAGVTMLENKVQELEDRLRSEEREKNTIQAAQRRLDRKLKDVTATLDQERNQHAEQRDQLSLRVKALKRQLDESEGEVERLEGVRRKVLRELEEQRELQAALQAKVNAMDNELRKIQQSRRSTLGSTLSSDEEDNYSDTKSITSILTDSPLQTTSC</sequence>
<keyword id="KW-0965">Cell junction</keyword>
<keyword id="KW-0175">Coiled coil</keyword>
<keyword id="KW-1185">Reference proteome</keyword>
<keyword id="KW-0796">Tight junction</keyword>
<reference key="1">
    <citation type="journal article" date="2013" name="Nature">
        <title>The zebrafish reference genome sequence and its relationship to the human genome.</title>
        <authorList>
            <person name="Howe K."/>
            <person name="Clark M.D."/>
            <person name="Torroja C.F."/>
            <person name="Torrance J."/>
            <person name="Berthelot C."/>
            <person name="Muffato M."/>
            <person name="Collins J.E."/>
            <person name="Humphray S."/>
            <person name="McLaren K."/>
            <person name="Matthews L."/>
            <person name="McLaren S."/>
            <person name="Sealy I."/>
            <person name="Caccamo M."/>
            <person name="Churcher C."/>
            <person name="Scott C."/>
            <person name="Barrett J.C."/>
            <person name="Koch R."/>
            <person name="Rauch G.J."/>
            <person name="White S."/>
            <person name="Chow W."/>
            <person name="Kilian B."/>
            <person name="Quintais L.T."/>
            <person name="Guerra-Assuncao J.A."/>
            <person name="Zhou Y."/>
            <person name="Gu Y."/>
            <person name="Yen J."/>
            <person name="Vogel J.H."/>
            <person name="Eyre T."/>
            <person name="Redmond S."/>
            <person name="Banerjee R."/>
            <person name="Chi J."/>
            <person name="Fu B."/>
            <person name="Langley E."/>
            <person name="Maguire S.F."/>
            <person name="Laird G.K."/>
            <person name="Lloyd D."/>
            <person name="Kenyon E."/>
            <person name="Donaldson S."/>
            <person name="Sehra H."/>
            <person name="Almeida-King J."/>
            <person name="Loveland J."/>
            <person name="Trevanion S."/>
            <person name="Jones M."/>
            <person name="Quail M."/>
            <person name="Willey D."/>
            <person name="Hunt A."/>
            <person name="Burton J."/>
            <person name="Sims S."/>
            <person name="McLay K."/>
            <person name="Plumb B."/>
            <person name="Davis J."/>
            <person name="Clee C."/>
            <person name="Oliver K."/>
            <person name="Clark R."/>
            <person name="Riddle C."/>
            <person name="Elliot D."/>
            <person name="Threadgold G."/>
            <person name="Harden G."/>
            <person name="Ware D."/>
            <person name="Begum S."/>
            <person name="Mortimore B."/>
            <person name="Kerry G."/>
            <person name="Heath P."/>
            <person name="Phillimore B."/>
            <person name="Tracey A."/>
            <person name="Corby N."/>
            <person name="Dunn M."/>
            <person name="Johnson C."/>
            <person name="Wood J."/>
            <person name="Clark S."/>
            <person name="Pelan S."/>
            <person name="Griffiths G."/>
            <person name="Smith M."/>
            <person name="Glithero R."/>
            <person name="Howden P."/>
            <person name="Barker N."/>
            <person name="Lloyd C."/>
            <person name="Stevens C."/>
            <person name="Harley J."/>
            <person name="Holt K."/>
            <person name="Panagiotidis G."/>
            <person name="Lovell J."/>
            <person name="Beasley H."/>
            <person name="Henderson C."/>
            <person name="Gordon D."/>
            <person name="Auger K."/>
            <person name="Wright D."/>
            <person name="Collins J."/>
            <person name="Raisen C."/>
            <person name="Dyer L."/>
            <person name="Leung K."/>
            <person name="Robertson L."/>
            <person name="Ambridge K."/>
            <person name="Leongamornlert D."/>
            <person name="McGuire S."/>
            <person name="Gilderthorp R."/>
            <person name="Griffiths C."/>
            <person name="Manthravadi D."/>
            <person name="Nichol S."/>
            <person name="Barker G."/>
            <person name="Whitehead S."/>
            <person name="Kay M."/>
            <person name="Brown J."/>
            <person name="Murnane C."/>
            <person name="Gray E."/>
            <person name="Humphries M."/>
            <person name="Sycamore N."/>
            <person name="Barker D."/>
            <person name="Saunders D."/>
            <person name="Wallis J."/>
            <person name="Babbage A."/>
            <person name="Hammond S."/>
            <person name="Mashreghi-Mohammadi M."/>
            <person name="Barr L."/>
            <person name="Martin S."/>
            <person name="Wray P."/>
            <person name="Ellington A."/>
            <person name="Matthews N."/>
            <person name="Ellwood M."/>
            <person name="Woodmansey R."/>
            <person name="Clark G."/>
            <person name="Cooper J."/>
            <person name="Tromans A."/>
            <person name="Grafham D."/>
            <person name="Skuce C."/>
            <person name="Pandian R."/>
            <person name="Andrews R."/>
            <person name="Harrison E."/>
            <person name="Kimberley A."/>
            <person name="Garnett J."/>
            <person name="Fosker N."/>
            <person name="Hall R."/>
            <person name="Garner P."/>
            <person name="Kelly D."/>
            <person name="Bird C."/>
            <person name="Palmer S."/>
            <person name="Gehring I."/>
            <person name="Berger A."/>
            <person name="Dooley C.M."/>
            <person name="Ersan-Urun Z."/>
            <person name="Eser C."/>
            <person name="Geiger H."/>
            <person name="Geisler M."/>
            <person name="Karotki L."/>
            <person name="Kirn A."/>
            <person name="Konantz J."/>
            <person name="Konantz M."/>
            <person name="Oberlander M."/>
            <person name="Rudolph-Geiger S."/>
            <person name="Teucke M."/>
            <person name="Lanz C."/>
            <person name="Raddatz G."/>
            <person name="Osoegawa K."/>
            <person name="Zhu B."/>
            <person name="Rapp A."/>
            <person name="Widaa S."/>
            <person name="Langford C."/>
            <person name="Yang F."/>
            <person name="Schuster S.C."/>
            <person name="Carter N.P."/>
            <person name="Harrow J."/>
            <person name="Ning Z."/>
            <person name="Herrero J."/>
            <person name="Searle S.M."/>
            <person name="Enright A."/>
            <person name="Geisler R."/>
            <person name="Plasterk R.H."/>
            <person name="Lee C."/>
            <person name="Westerfield M."/>
            <person name="de Jong P.J."/>
            <person name="Zon L.I."/>
            <person name="Postlethwait J.H."/>
            <person name="Nusslein-Volhard C."/>
            <person name="Hubbard T.J."/>
            <person name="Roest Crollius H."/>
            <person name="Rogers J."/>
            <person name="Stemple D.L."/>
        </authorList>
    </citation>
    <scope>NUCLEOTIDE SEQUENCE [LARGE SCALE GENOMIC DNA]</scope>
    <source>
        <strain>Tuebingen</strain>
    </source>
</reference>
<reference key="2">
    <citation type="submission" date="2007-04" db="EMBL/GenBank/DDBJ databases">
        <authorList>
            <consortium name="NIH - Zebrafish Gene Collection (ZGC) project"/>
        </authorList>
    </citation>
    <scope>NUCLEOTIDE SEQUENCE [LARGE SCALE MRNA]</scope>
    <source>
        <strain>AB</strain>
    </source>
</reference>
<protein>
    <recommendedName>
        <fullName evidence="3">Cingulin</fullName>
    </recommendedName>
</protein>
<organism>
    <name type="scientific">Danio rerio</name>
    <name type="common">Zebrafish</name>
    <name type="synonym">Brachydanio rerio</name>
    <dbReference type="NCBI Taxonomy" id="7955"/>
    <lineage>
        <taxon>Eukaryota</taxon>
        <taxon>Metazoa</taxon>
        <taxon>Chordata</taxon>
        <taxon>Craniata</taxon>
        <taxon>Vertebrata</taxon>
        <taxon>Euteleostomi</taxon>
        <taxon>Actinopterygii</taxon>
        <taxon>Neopterygii</taxon>
        <taxon>Teleostei</taxon>
        <taxon>Ostariophysi</taxon>
        <taxon>Cypriniformes</taxon>
        <taxon>Danionidae</taxon>
        <taxon>Danioninae</taxon>
        <taxon>Danio</taxon>
    </lineage>
</organism>
<accession>Q1L8T5</accession>
<accession>A5D6T7</accession>
<comment type="function">
    <text evidence="1">Probably plays a role in the formation and regulation of the tight junction (TJ) paracellular permeability barrier. Note=Localizes to the apical junction complex composed of tight and adherens junctions.</text>
</comment>
<comment type="subunit">
    <text evidence="3">Homodimer.</text>
</comment>
<comment type="subcellular location">
    <subcellularLocation>
        <location evidence="2">Cell junction</location>
        <location evidence="2">Tight junction</location>
    </subcellularLocation>
</comment>
<comment type="similarity">
    <text evidence="6">Belongs to the cingulin family.</text>
</comment>